<keyword id="KW-1185">Reference proteome</keyword>
<keyword id="KW-0687">Ribonucleoprotein</keyword>
<keyword id="KW-0689">Ribosomal protein</keyword>
<keyword id="KW-0694">RNA-binding</keyword>
<keyword id="KW-0699">rRNA-binding</keyword>
<organism>
    <name type="scientific">Neisseria gonorrhoeae (strain ATCC 700825 / FA 1090)</name>
    <dbReference type="NCBI Taxonomy" id="242231"/>
    <lineage>
        <taxon>Bacteria</taxon>
        <taxon>Pseudomonadati</taxon>
        <taxon>Pseudomonadota</taxon>
        <taxon>Betaproteobacteria</taxon>
        <taxon>Neisseriales</taxon>
        <taxon>Neisseriaceae</taxon>
        <taxon>Neisseria</taxon>
    </lineage>
</organism>
<feature type="chain" id="PRO_0000229555" description="Small ribosomal subunit protein bS6">
    <location>
        <begin position="1"/>
        <end position="122"/>
    </location>
</feature>
<protein>
    <recommendedName>
        <fullName evidence="1">Small ribosomal subunit protein bS6</fullName>
    </recommendedName>
    <alternativeName>
        <fullName evidence="2">30S ribosomal protein S6</fullName>
    </alternativeName>
</protein>
<proteinExistence type="inferred from homology"/>
<name>RS6_NEIG1</name>
<sequence length="122" mass="13861">MRHYEIVFIVHPDQSEQVPAMVERYKTMITEANGKIHRLEDWGRRQLAYPINKIHKAHYVLMNIETTPEVVGELETAFRFNDAVLRHLTIKTKHAVTEASPMLGGEKAKNLLVGAAEEAAAQ</sequence>
<accession>Q5F925</accession>
<dbReference type="EMBL" id="AE004969">
    <property type="protein sequence ID" value="AAW89312.1"/>
    <property type="molecule type" value="Genomic_DNA"/>
</dbReference>
<dbReference type="RefSeq" id="WP_003688967.1">
    <property type="nucleotide sequence ID" value="NC_002946.2"/>
</dbReference>
<dbReference type="RefSeq" id="YP_207724.1">
    <property type="nucleotide sequence ID" value="NC_002946.2"/>
</dbReference>
<dbReference type="SMR" id="Q5F925"/>
<dbReference type="STRING" id="242231.NGO_0581"/>
<dbReference type="GeneID" id="66752921"/>
<dbReference type="KEGG" id="ngo:NGO_0581"/>
<dbReference type="PATRIC" id="fig|242231.10.peg.687"/>
<dbReference type="HOGENOM" id="CLU_113441_6_1_4"/>
<dbReference type="Proteomes" id="UP000000535">
    <property type="component" value="Chromosome"/>
</dbReference>
<dbReference type="GO" id="GO:0022627">
    <property type="term" value="C:cytosolic small ribosomal subunit"/>
    <property type="evidence" value="ECO:0007669"/>
    <property type="project" value="TreeGrafter"/>
</dbReference>
<dbReference type="GO" id="GO:0070181">
    <property type="term" value="F:small ribosomal subunit rRNA binding"/>
    <property type="evidence" value="ECO:0007669"/>
    <property type="project" value="TreeGrafter"/>
</dbReference>
<dbReference type="GO" id="GO:0003735">
    <property type="term" value="F:structural constituent of ribosome"/>
    <property type="evidence" value="ECO:0007669"/>
    <property type="project" value="InterPro"/>
</dbReference>
<dbReference type="GO" id="GO:0006412">
    <property type="term" value="P:translation"/>
    <property type="evidence" value="ECO:0007669"/>
    <property type="project" value="UniProtKB-UniRule"/>
</dbReference>
<dbReference type="CDD" id="cd00473">
    <property type="entry name" value="bS6"/>
    <property type="match status" value="1"/>
</dbReference>
<dbReference type="FunFam" id="3.30.70.60:FF:000003">
    <property type="entry name" value="30S ribosomal protein S6"/>
    <property type="match status" value="1"/>
</dbReference>
<dbReference type="Gene3D" id="3.30.70.60">
    <property type="match status" value="1"/>
</dbReference>
<dbReference type="HAMAP" id="MF_00360">
    <property type="entry name" value="Ribosomal_bS6"/>
    <property type="match status" value="1"/>
</dbReference>
<dbReference type="InterPro" id="IPR000529">
    <property type="entry name" value="Ribosomal_bS6"/>
</dbReference>
<dbReference type="InterPro" id="IPR020815">
    <property type="entry name" value="Ribosomal_bS6_CS"/>
</dbReference>
<dbReference type="InterPro" id="IPR035980">
    <property type="entry name" value="Ribosomal_bS6_sf"/>
</dbReference>
<dbReference type="InterPro" id="IPR020814">
    <property type="entry name" value="Ribosomal_S6_plastid/chlpt"/>
</dbReference>
<dbReference type="InterPro" id="IPR014717">
    <property type="entry name" value="Transl_elong_EF1B/ribsomal_bS6"/>
</dbReference>
<dbReference type="NCBIfam" id="TIGR00166">
    <property type="entry name" value="S6"/>
    <property type="match status" value="1"/>
</dbReference>
<dbReference type="PANTHER" id="PTHR21011">
    <property type="entry name" value="MITOCHONDRIAL 28S RIBOSOMAL PROTEIN S6"/>
    <property type="match status" value="1"/>
</dbReference>
<dbReference type="PANTHER" id="PTHR21011:SF1">
    <property type="entry name" value="SMALL RIBOSOMAL SUBUNIT PROTEIN BS6M"/>
    <property type="match status" value="1"/>
</dbReference>
<dbReference type="Pfam" id="PF01250">
    <property type="entry name" value="Ribosomal_S6"/>
    <property type="match status" value="1"/>
</dbReference>
<dbReference type="SUPFAM" id="SSF54995">
    <property type="entry name" value="Ribosomal protein S6"/>
    <property type="match status" value="1"/>
</dbReference>
<dbReference type="PROSITE" id="PS01048">
    <property type="entry name" value="RIBOSOMAL_S6"/>
    <property type="match status" value="1"/>
</dbReference>
<evidence type="ECO:0000255" key="1">
    <source>
        <dbReference type="HAMAP-Rule" id="MF_00360"/>
    </source>
</evidence>
<evidence type="ECO:0000305" key="2"/>
<comment type="function">
    <text evidence="1">Binds together with bS18 to 16S ribosomal RNA.</text>
</comment>
<comment type="similarity">
    <text evidence="1">Belongs to the bacterial ribosomal protein bS6 family.</text>
</comment>
<reference key="1">
    <citation type="submission" date="2003-03" db="EMBL/GenBank/DDBJ databases">
        <title>The complete genome sequence of Neisseria gonorrhoeae.</title>
        <authorList>
            <person name="Lewis L.A."/>
            <person name="Gillaspy A.F."/>
            <person name="McLaughlin R.E."/>
            <person name="Gipson M."/>
            <person name="Ducey T.F."/>
            <person name="Ownbey T."/>
            <person name="Hartman K."/>
            <person name="Nydick C."/>
            <person name="Carson M.B."/>
            <person name="Vaughn J."/>
            <person name="Thomson C."/>
            <person name="Song L."/>
            <person name="Lin S."/>
            <person name="Yuan X."/>
            <person name="Najar F."/>
            <person name="Zhan M."/>
            <person name="Ren Q."/>
            <person name="Zhu H."/>
            <person name="Qi S."/>
            <person name="Kenton S.M."/>
            <person name="Lai H."/>
            <person name="White J.D."/>
            <person name="Clifton S."/>
            <person name="Roe B.A."/>
            <person name="Dyer D.W."/>
        </authorList>
    </citation>
    <scope>NUCLEOTIDE SEQUENCE [LARGE SCALE GENOMIC DNA]</scope>
    <source>
        <strain>ATCC 700825 / FA 1090</strain>
    </source>
</reference>
<gene>
    <name evidence="1" type="primary">rpsF</name>
    <name type="ordered locus">NGO_0581</name>
</gene>